<protein>
    <recommendedName>
        <fullName>Probable methyltransferase PMT18</fullName>
        <ecNumber>2.1.1.-</ecNumber>
    </recommendedName>
</protein>
<keyword id="KW-0256">Endoplasmic reticulum</keyword>
<keyword id="KW-0325">Glycoprotein</keyword>
<keyword id="KW-0472">Membrane</keyword>
<keyword id="KW-0489">Methyltransferase</keyword>
<keyword id="KW-1185">Reference proteome</keyword>
<keyword id="KW-0735">Signal-anchor</keyword>
<keyword id="KW-0808">Transferase</keyword>
<keyword id="KW-0812">Transmembrane</keyword>
<keyword id="KW-1133">Transmembrane helix</keyword>
<name>PMTI_ARATH</name>
<dbReference type="EC" id="2.1.1.-"/>
<dbReference type="EMBL" id="AC021045">
    <property type="protein sequence ID" value="AAF97349.1"/>
    <property type="status" value="ALT_SEQ"/>
    <property type="molecule type" value="Genomic_DNA"/>
</dbReference>
<dbReference type="EMBL" id="AC027035">
    <property type="protein sequence ID" value="AAG51278.1"/>
    <property type="molecule type" value="Genomic_DNA"/>
</dbReference>
<dbReference type="EMBL" id="CP002684">
    <property type="protein sequence ID" value="AEE31570.1"/>
    <property type="molecule type" value="Genomic_DNA"/>
</dbReference>
<dbReference type="EMBL" id="AY140083">
    <property type="protein sequence ID" value="AAM98224.1"/>
    <property type="molecule type" value="mRNA"/>
</dbReference>
<dbReference type="EMBL" id="BT009665">
    <property type="protein sequence ID" value="AAP78933.1"/>
    <property type="molecule type" value="mRNA"/>
</dbReference>
<dbReference type="PIR" id="G86455">
    <property type="entry name" value="G86455"/>
</dbReference>
<dbReference type="RefSeq" id="NP_564419.1">
    <property type="nucleotide sequence ID" value="NM_103049.3"/>
</dbReference>
<dbReference type="FunCoup" id="Q9C884">
    <property type="interactions" value="781"/>
</dbReference>
<dbReference type="IntAct" id="Q9C884">
    <property type="interactions" value="1"/>
</dbReference>
<dbReference type="STRING" id="3702.Q9C884"/>
<dbReference type="GlyGen" id="Q9C884">
    <property type="glycosylation" value="2 sites"/>
</dbReference>
<dbReference type="PaxDb" id="3702-AT1G33170.1"/>
<dbReference type="ProteomicsDB" id="226284"/>
<dbReference type="EnsemblPlants" id="AT1G33170.1">
    <property type="protein sequence ID" value="AT1G33170.1"/>
    <property type="gene ID" value="AT1G33170"/>
</dbReference>
<dbReference type="GeneID" id="840213"/>
<dbReference type="Gramene" id="AT1G33170.1">
    <property type="protein sequence ID" value="AT1G33170.1"/>
    <property type="gene ID" value="AT1G33170"/>
</dbReference>
<dbReference type="KEGG" id="ath:AT1G33170"/>
<dbReference type="Araport" id="AT1G33170"/>
<dbReference type="TAIR" id="AT1G33170"/>
<dbReference type="eggNOG" id="ENOG502QRZJ">
    <property type="taxonomic scope" value="Eukaryota"/>
</dbReference>
<dbReference type="HOGENOM" id="CLU_010485_2_2_1"/>
<dbReference type="InParanoid" id="Q9C884"/>
<dbReference type="OMA" id="THYKGWE"/>
<dbReference type="PhylomeDB" id="Q9C884"/>
<dbReference type="PRO" id="PR:Q9C884"/>
<dbReference type="Proteomes" id="UP000006548">
    <property type="component" value="Chromosome 1"/>
</dbReference>
<dbReference type="ExpressionAtlas" id="Q9C884">
    <property type="expression patterns" value="baseline and differential"/>
</dbReference>
<dbReference type="GO" id="GO:0005789">
    <property type="term" value="C:endoplasmic reticulum membrane"/>
    <property type="evidence" value="ECO:0007669"/>
    <property type="project" value="UniProtKB-SubCell"/>
</dbReference>
<dbReference type="GO" id="GO:0005634">
    <property type="term" value="C:nucleus"/>
    <property type="evidence" value="ECO:0007005"/>
    <property type="project" value="TAIR"/>
</dbReference>
<dbReference type="GO" id="GO:0008168">
    <property type="term" value="F:methyltransferase activity"/>
    <property type="evidence" value="ECO:0007669"/>
    <property type="project" value="UniProtKB-KW"/>
</dbReference>
<dbReference type="GO" id="GO:0032259">
    <property type="term" value="P:methylation"/>
    <property type="evidence" value="ECO:0007669"/>
    <property type="project" value="UniProtKB-KW"/>
</dbReference>
<dbReference type="CDD" id="cd02440">
    <property type="entry name" value="AdoMet_MTases"/>
    <property type="match status" value="1"/>
</dbReference>
<dbReference type="FunFam" id="3.40.50.150:FF:000123">
    <property type="entry name" value="Putative methyltransferase PMT15"/>
    <property type="match status" value="1"/>
</dbReference>
<dbReference type="Gene3D" id="3.40.50.150">
    <property type="entry name" value="Vaccinia Virus protein VP39"/>
    <property type="match status" value="1"/>
</dbReference>
<dbReference type="InterPro" id="IPR004159">
    <property type="entry name" value="Put_SAM_MeTrfase"/>
</dbReference>
<dbReference type="InterPro" id="IPR029063">
    <property type="entry name" value="SAM-dependent_MTases_sf"/>
</dbReference>
<dbReference type="PANTHER" id="PTHR10108:SF1058">
    <property type="entry name" value="METHYLTRANSFERASE PMT18-RELATED"/>
    <property type="match status" value="1"/>
</dbReference>
<dbReference type="PANTHER" id="PTHR10108">
    <property type="entry name" value="SAM-DEPENDENT METHYLTRANSFERASE"/>
    <property type="match status" value="1"/>
</dbReference>
<dbReference type="Pfam" id="PF03141">
    <property type="entry name" value="Methyltransf_29"/>
    <property type="match status" value="1"/>
</dbReference>
<dbReference type="SUPFAM" id="SSF53335">
    <property type="entry name" value="S-adenosyl-L-methionine-dependent methyltransferases"/>
    <property type="match status" value="2"/>
</dbReference>
<feature type="chain" id="PRO_0000393258" description="Probable methyltransferase PMT18">
    <location>
        <begin position="1"/>
        <end position="639"/>
    </location>
</feature>
<feature type="topological domain" description="Cytoplasmic" evidence="1">
    <location>
        <begin position="1"/>
        <end position="19"/>
    </location>
</feature>
<feature type="transmembrane region" description="Helical; Signal-anchor for type II membrane protein" evidence="1">
    <location>
        <begin position="20"/>
        <end position="42"/>
    </location>
</feature>
<feature type="topological domain" description="Lumenal" evidence="1">
    <location>
        <begin position="43"/>
        <end position="639"/>
    </location>
</feature>
<feature type="region of interest" description="Disordered" evidence="2">
    <location>
        <begin position="41"/>
        <end position="86"/>
    </location>
</feature>
<feature type="compositionally biased region" description="Low complexity" evidence="2">
    <location>
        <begin position="58"/>
        <end position="85"/>
    </location>
</feature>
<feature type="glycosylation site" description="N-linked (GlcNAc...) asparagine" evidence="1">
    <location>
        <position position="104"/>
    </location>
</feature>
<feature type="glycosylation site" description="N-linked (GlcNAc...) asparagine" evidence="1">
    <location>
        <position position="427"/>
    </location>
</feature>
<sequence length="639" mass="73186">MAKENSSHSLAEAKRKRLTWILCVSGLCILSYVLGSWQTNTVPTSSSEAYSRMGCDETSTTTRAQTTQTQTNPSSDDTSSSLSSSEPVELDFESHHKLELKITNQTVKYFEPCDMSLSEYTPCEDRERGRRFDRNMMKYRERHCPSKDELLYCLIPPPPNYKIPFKWPQSRDYAWYDNIPHKELSIEKAIQNWIQVEGERFRFPGGGTMFPRGADAYIDDIARLIPLTDGAIRTAIDTGCGVASFGAYLLKRDIVAMSFAPRDTHEAQVQFALERGVPAIIGIMGSRRLPYPARAFDLAHCSRCLIPWFQNDGLYLTEVDRVLRPGGYWILSGPPINWKKYWKGWERSQEDLKQEQDSIEDAARSLCWKKVTEKGDLSIWQKPINHVECNKLKRVHKTPPLCSKSDLPDFAWYKDLESCVTPLPEANSSDEFAGGALEDWPNRAFAVPPRIIGGTIPDINAEKFREDNEVWKERISYYKQIMPELSRGRFRNIMDMNAYLGGFAAAMMKYPSWVMNVVPVDAEKQTLGVIFERGFIGTYQDWCEGFSTYPRTYDLIHAGGLFSIYENRCDVTLILLEMDRILRPEGTVVFRDTVEMLTKIQSITNGMRWKSRILDHERGPFNPEKILLAVKSYWTGPSS</sequence>
<proteinExistence type="evidence at transcript level"/>
<gene>
    <name type="ordered locus">At1g33170</name>
    <name type="ORF">T16O9.7</name>
    <name type="ORF">T9L6.6</name>
</gene>
<organism>
    <name type="scientific">Arabidopsis thaliana</name>
    <name type="common">Mouse-ear cress</name>
    <dbReference type="NCBI Taxonomy" id="3702"/>
    <lineage>
        <taxon>Eukaryota</taxon>
        <taxon>Viridiplantae</taxon>
        <taxon>Streptophyta</taxon>
        <taxon>Embryophyta</taxon>
        <taxon>Tracheophyta</taxon>
        <taxon>Spermatophyta</taxon>
        <taxon>Magnoliopsida</taxon>
        <taxon>eudicotyledons</taxon>
        <taxon>Gunneridae</taxon>
        <taxon>Pentapetalae</taxon>
        <taxon>rosids</taxon>
        <taxon>malvids</taxon>
        <taxon>Brassicales</taxon>
        <taxon>Brassicaceae</taxon>
        <taxon>Camelineae</taxon>
        <taxon>Arabidopsis</taxon>
    </lineage>
</organism>
<accession>Q9C884</accession>
<accession>Q9LP29</accession>
<reference key="1">
    <citation type="journal article" date="2000" name="Nature">
        <title>Sequence and analysis of chromosome 1 of the plant Arabidopsis thaliana.</title>
        <authorList>
            <person name="Theologis A."/>
            <person name="Ecker J.R."/>
            <person name="Palm C.J."/>
            <person name="Federspiel N.A."/>
            <person name="Kaul S."/>
            <person name="White O."/>
            <person name="Alonso J."/>
            <person name="Altafi H."/>
            <person name="Araujo R."/>
            <person name="Bowman C.L."/>
            <person name="Brooks S.Y."/>
            <person name="Buehler E."/>
            <person name="Chan A."/>
            <person name="Chao Q."/>
            <person name="Chen H."/>
            <person name="Cheuk R.F."/>
            <person name="Chin C.W."/>
            <person name="Chung M.K."/>
            <person name="Conn L."/>
            <person name="Conway A.B."/>
            <person name="Conway A.R."/>
            <person name="Creasy T.H."/>
            <person name="Dewar K."/>
            <person name="Dunn P."/>
            <person name="Etgu P."/>
            <person name="Feldblyum T.V."/>
            <person name="Feng J.-D."/>
            <person name="Fong B."/>
            <person name="Fujii C.Y."/>
            <person name="Gill J.E."/>
            <person name="Goldsmith A.D."/>
            <person name="Haas B."/>
            <person name="Hansen N.F."/>
            <person name="Hughes B."/>
            <person name="Huizar L."/>
            <person name="Hunter J.L."/>
            <person name="Jenkins J."/>
            <person name="Johnson-Hopson C."/>
            <person name="Khan S."/>
            <person name="Khaykin E."/>
            <person name="Kim C.J."/>
            <person name="Koo H.L."/>
            <person name="Kremenetskaia I."/>
            <person name="Kurtz D.B."/>
            <person name="Kwan A."/>
            <person name="Lam B."/>
            <person name="Langin-Hooper S."/>
            <person name="Lee A."/>
            <person name="Lee J.M."/>
            <person name="Lenz C.A."/>
            <person name="Li J.H."/>
            <person name="Li Y.-P."/>
            <person name="Lin X."/>
            <person name="Liu S.X."/>
            <person name="Liu Z.A."/>
            <person name="Luros J.S."/>
            <person name="Maiti R."/>
            <person name="Marziali A."/>
            <person name="Militscher J."/>
            <person name="Miranda M."/>
            <person name="Nguyen M."/>
            <person name="Nierman W.C."/>
            <person name="Osborne B.I."/>
            <person name="Pai G."/>
            <person name="Peterson J."/>
            <person name="Pham P.K."/>
            <person name="Rizzo M."/>
            <person name="Rooney T."/>
            <person name="Rowley D."/>
            <person name="Sakano H."/>
            <person name="Salzberg S.L."/>
            <person name="Schwartz J.R."/>
            <person name="Shinn P."/>
            <person name="Southwick A.M."/>
            <person name="Sun H."/>
            <person name="Tallon L.J."/>
            <person name="Tambunga G."/>
            <person name="Toriumi M.J."/>
            <person name="Town C.D."/>
            <person name="Utterback T."/>
            <person name="Van Aken S."/>
            <person name="Vaysberg M."/>
            <person name="Vysotskaia V.S."/>
            <person name="Walker M."/>
            <person name="Wu D."/>
            <person name="Yu G."/>
            <person name="Fraser C.M."/>
            <person name="Venter J.C."/>
            <person name="Davis R.W."/>
        </authorList>
    </citation>
    <scope>NUCLEOTIDE SEQUENCE [LARGE SCALE GENOMIC DNA]</scope>
    <source>
        <strain>cv. Columbia</strain>
    </source>
</reference>
<reference key="2">
    <citation type="journal article" date="2017" name="Plant J.">
        <title>Araport11: a complete reannotation of the Arabidopsis thaliana reference genome.</title>
        <authorList>
            <person name="Cheng C.Y."/>
            <person name="Krishnakumar V."/>
            <person name="Chan A.P."/>
            <person name="Thibaud-Nissen F."/>
            <person name="Schobel S."/>
            <person name="Town C.D."/>
        </authorList>
    </citation>
    <scope>GENOME REANNOTATION</scope>
    <source>
        <strain>cv. Columbia</strain>
    </source>
</reference>
<reference key="3">
    <citation type="journal article" date="2003" name="Science">
        <title>Empirical analysis of transcriptional activity in the Arabidopsis genome.</title>
        <authorList>
            <person name="Yamada K."/>
            <person name="Lim J."/>
            <person name="Dale J.M."/>
            <person name="Chen H."/>
            <person name="Shinn P."/>
            <person name="Palm C.J."/>
            <person name="Southwick A.M."/>
            <person name="Wu H.C."/>
            <person name="Kim C.J."/>
            <person name="Nguyen M."/>
            <person name="Pham P.K."/>
            <person name="Cheuk R.F."/>
            <person name="Karlin-Newmann G."/>
            <person name="Liu S.X."/>
            <person name="Lam B."/>
            <person name="Sakano H."/>
            <person name="Wu T."/>
            <person name="Yu G."/>
            <person name="Miranda M."/>
            <person name="Quach H.L."/>
            <person name="Tripp M."/>
            <person name="Chang C.H."/>
            <person name="Lee J.M."/>
            <person name="Toriumi M.J."/>
            <person name="Chan M.M."/>
            <person name="Tang C.C."/>
            <person name="Onodera C.S."/>
            <person name="Deng J.M."/>
            <person name="Akiyama K."/>
            <person name="Ansari Y."/>
            <person name="Arakawa T."/>
            <person name="Banh J."/>
            <person name="Banno F."/>
            <person name="Bowser L."/>
            <person name="Brooks S.Y."/>
            <person name="Carninci P."/>
            <person name="Chao Q."/>
            <person name="Choy N."/>
            <person name="Enju A."/>
            <person name="Goldsmith A.D."/>
            <person name="Gurjal M."/>
            <person name="Hansen N.F."/>
            <person name="Hayashizaki Y."/>
            <person name="Johnson-Hopson C."/>
            <person name="Hsuan V.W."/>
            <person name="Iida K."/>
            <person name="Karnes M."/>
            <person name="Khan S."/>
            <person name="Koesema E."/>
            <person name="Ishida J."/>
            <person name="Jiang P.X."/>
            <person name="Jones T."/>
            <person name="Kawai J."/>
            <person name="Kamiya A."/>
            <person name="Meyers C."/>
            <person name="Nakajima M."/>
            <person name="Narusaka M."/>
            <person name="Seki M."/>
            <person name="Sakurai T."/>
            <person name="Satou M."/>
            <person name="Tamse R."/>
            <person name="Vaysberg M."/>
            <person name="Wallender E.K."/>
            <person name="Wong C."/>
            <person name="Yamamura Y."/>
            <person name="Yuan S."/>
            <person name="Shinozaki K."/>
            <person name="Davis R.W."/>
            <person name="Theologis A."/>
            <person name="Ecker J.R."/>
        </authorList>
    </citation>
    <scope>NUCLEOTIDE SEQUENCE [LARGE SCALE MRNA]</scope>
    <source>
        <strain>cv. Columbia</strain>
    </source>
</reference>
<reference key="4">
    <citation type="journal article" date="2007" name="Plant J.">
        <title>The TUMOROUS SHOOT DEVELOPMENT2 gene of Arabidopsis encoding a putative methyltransferase is required for cell adhesion and co-ordinated plant development.</title>
        <authorList>
            <person name="Krupkova E."/>
            <person name="Immerzeel P."/>
            <person name="Pauly M."/>
            <person name="Schmulling T."/>
        </authorList>
    </citation>
    <scope>GENE FAMILY</scope>
</reference>
<evidence type="ECO:0000255" key="1"/>
<evidence type="ECO:0000256" key="2">
    <source>
        <dbReference type="SAM" id="MobiDB-lite"/>
    </source>
</evidence>
<evidence type="ECO:0000305" key="3"/>
<comment type="subcellular location">
    <subcellularLocation>
        <location evidence="3">Endoplasmic reticulum membrane</location>
        <topology evidence="3">Single-pass type II membrane protein</topology>
    </subcellularLocation>
</comment>
<comment type="similarity">
    <text evidence="3">Belongs to the methyltransferase superfamily.</text>
</comment>
<comment type="sequence caution" evidence="3">
    <conflict type="erroneous gene model prediction">
        <sequence resource="EMBL-CDS" id="AAF97349"/>
    </conflict>
</comment>